<gene>
    <name type="primary">RPL10</name>
    <name type="synonym">LP20</name>
</gene>
<comment type="subunit">
    <text evidence="1">Component of the small ribosomal subunit. Mature ribosomes consist of a small (40S) and a large (60S) subunit. The 40S subunit contains about 33 different proteins and 1 molecule of RNA (18S). The 60S subunit contains about 49 different proteins and 3 molecules of RNA (25S, 5.8S and 5S) (By similarity).</text>
</comment>
<comment type="similarity">
    <text evidence="2">Belongs to the universal ribosomal protein uL16 family.</text>
</comment>
<evidence type="ECO:0000250" key="1"/>
<evidence type="ECO:0000305" key="2"/>
<protein>
    <recommendedName>
        <fullName evidence="2">Large ribosomal subunit protein uL16</fullName>
    </recommendedName>
    <alternativeName>
        <fullName>60S ribosomal protein L10</fullName>
    </alternativeName>
    <alternativeName>
        <fullName>Wilms tumor suppressor homolog</fullName>
    </alternativeName>
</protein>
<accession>O22431</accession>
<keyword id="KW-0687">Ribonucleoprotein</keyword>
<keyword id="KW-0689">Ribosomal protein</keyword>
<sequence length="228" mass="25876">MGRRPARCYRQIKNKPYPKSRYCRGVPDPKIRIFDVGAKKRLVDEFPFCVHLVSWEKENVSSEALEAGRIACNKYMVKFAGKDGFHLRVRVHPFHVLRSNKMLSCAGADRLQTGMRGAFGKPQGTCARVAIGQVLLSVRSRDNHSNHAQEALRRAKFKFPGREKIIVNRKWGFTKYTRADYLKWKTENRIVPDGVNPKLLGCRGPLSNRKPGQAFLKPAVVLSSDLVA</sequence>
<proteinExistence type="evidence at transcript level"/>
<feature type="chain" id="PRO_0000147122" description="Large ribosomal subunit protein uL16">
    <location>
        <begin position="1"/>
        <end position="228"/>
    </location>
</feature>
<name>RL10_PINTA</name>
<reference key="1">
    <citation type="submission" date="1997-07" db="EMBL/GenBank/DDBJ databases">
        <title>Isolation and characterization of a water deficit stress repressible Wilm's tumor suppressor homolog from loblolly pine (Pinus taeda).</title>
        <authorList>
            <person name="Padmanabhan V."/>
            <person name="Dias M.A.D.L."/>
            <person name="Newton R.J."/>
        </authorList>
    </citation>
    <scope>NUCLEOTIDE SEQUENCE [MRNA]</scope>
</reference>
<organism>
    <name type="scientific">Pinus taeda</name>
    <name type="common">Loblolly pine</name>
    <dbReference type="NCBI Taxonomy" id="3352"/>
    <lineage>
        <taxon>Eukaryota</taxon>
        <taxon>Viridiplantae</taxon>
        <taxon>Streptophyta</taxon>
        <taxon>Embryophyta</taxon>
        <taxon>Tracheophyta</taxon>
        <taxon>Spermatophyta</taxon>
        <taxon>Pinopsida</taxon>
        <taxon>Pinidae</taxon>
        <taxon>Conifers I</taxon>
        <taxon>Pinales</taxon>
        <taxon>Pinaceae</taxon>
        <taxon>Pinus</taxon>
        <taxon>Pinus subgen. Pinus</taxon>
    </lineage>
</organism>
<dbReference type="EMBL" id="AF013804">
    <property type="protein sequence ID" value="AAB66347.1"/>
    <property type="molecule type" value="mRNA"/>
</dbReference>
<dbReference type="PIR" id="T07957">
    <property type="entry name" value="T07957"/>
</dbReference>
<dbReference type="SMR" id="O22431"/>
<dbReference type="GO" id="GO:1990904">
    <property type="term" value="C:ribonucleoprotein complex"/>
    <property type="evidence" value="ECO:0007669"/>
    <property type="project" value="UniProtKB-KW"/>
</dbReference>
<dbReference type="GO" id="GO:0005840">
    <property type="term" value="C:ribosome"/>
    <property type="evidence" value="ECO:0007669"/>
    <property type="project" value="UniProtKB-KW"/>
</dbReference>
<dbReference type="GO" id="GO:0003735">
    <property type="term" value="F:structural constituent of ribosome"/>
    <property type="evidence" value="ECO:0007669"/>
    <property type="project" value="InterPro"/>
</dbReference>
<dbReference type="GO" id="GO:0006412">
    <property type="term" value="P:translation"/>
    <property type="evidence" value="ECO:0007669"/>
    <property type="project" value="InterPro"/>
</dbReference>
<dbReference type="CDD" id="cd01433">
    <property type="entry name" value="Ribosomal_L16_L10e"/>
    <property type="match status" value="1"/>
</dbReference>
<dbReference type="FunFam" id="3.90.1170.10:FF:000002">
    <property type="entry name" value="60S ribosomal protein L10"/>
    <property type="match status" value="1"/>
</dbReference>
<dbReference type="FunFam" id="3.30.60.300:FF:000003">
    <property type="entry name" value="60S ribosomal protein L10, putative"/>
    <property type="match status" value="1"/>
</dbReference>
<dbReference type="Gene3D" id="3.90.1170.10">
    <property type="entry name" value="Ribosomal protein L10e/L16"/>
    <property type="match status" value="1"/>
</dbReference>
<dbReference type="InterPro" id="IPR047873">
    <property type="entry name" value="Ribosomal_uL16"/>
</dbReference>
<dbReference type="InterPro" id="IPR018255">
    <property type="entry name" value="Ribosomal_uL16_CS_euk_arc"/>
</dbReference>
<dbReference type="InterPro" id="IPR016180">
    <property type="entry name" value="Ribosomal_uL16_dom"/>
</dbReference>
<dbReference type="InterPro" id="IPR001197">
    <property type="entry name" value="Ribosomal_uL16_euk_arch"/>
</dbReference>
<dbReference type="InterPro" id="IPR036920">
    <property type="entry name" value="Ribosomal_uL16_sf"/>
</dbReference>
<dbReference type="NCBIfam" id="NF003239">
    <property type="entry name" value="PRK04199.1-4"/>
    <property type="match status" value="1"/>
</dbReference>
<dbReference type="NCBIfam" id="TIGR00279">
    <property type="entry name" value="uL16_euk_arch"/>
    <property type="match status" value="1"/>
</dbReference>
<dbReference type="PANTHER" id="PTHR11726">
    <property type="entry name" value="60S RIBOSOMAL PROTEIN L10"/>
    <property type="match status" value="1"/>
</dbReference>
<dbReference type="Pfam" id="PF00252">
    <property type="entry name" value="Ribosomal_L16"/>
    <property type="match status" value="1"/>
</dbReference>
<dbReference type="SUPFAM" id="SSF54686">
    <property type="entry name" value="Ribosomal protein L16p/L10e"/>
    <property type="match status" value="1"/>
</dbReference>
<dbReference type="PROSITE" id="PS01257">
    <property type="entry name" value="RIBOSOMAL_L10E"/>
    <property type="match status" value="1"/>
</dbReference>